<evidence type="ECO:0000255" key="1">
    <source>
        <dbReference type="HAMAP-Rule" id="MF_01246"/>
    </source>
</evidence>
<gene>
    <name type="ordered locus">BBR47_56650</name>
</gene>
<feature type="chain" id="PRO_1000165044" description="Carbohydrate deacetylase">
    <location>
        <begin position="1"/>
        <end position="248"/>
    </location>
</feature>
<feature type="binding site" evidence="1">
    <location>
        <position position="59"/>
    </location>
    <ligand>
        <name>Mg(2+)</name>
        <dbReference type="ChEBI" id="CHEBI:18420"/>
    </ligand>
</feature>
<feature type="binding site" evidence="1">
    <location>
        <position position="121"/>
    </location>
    <ligand>
        <name>Mg(2+)</name>
        <dbReference type="ChEBI" id="CHEBI:18420"/>
    </ligand>
</feature>
<reference key="1">
    <citation type="submission" date="2005-03" db="EMBL/GenBank/DDBJ databases">
        <title>Brevibacillus brevis strain 47, complete genome.</title>
        <authorList>
            <person name="Hosoyama A."/>
            <person name="Yamada R."/>
            <person name="Hongo Y."/>
            <person name="Terui Y."/>
            <person name="Ankai A."/>
            <person name="Masuyama W."/>
            <person name="Sekiguchi M."/>
            <person name="Takeda T."/>
            <person name="Asano K."/>
            <person name="Ohji S."/>
            <person name="Ichikawa N."/>
            <person name="Narita S."/>
            <person name="Aoki N."/>
            <person name="Miura H."/>
            <person name="Matsushita S."/>
            <person name="Sekigawa T."/>
            <person name="Yamagata H."/>
            <person name="Yoshikawa H."/>
            <person name="Udaka S."/>
            <person name="Tanikawa S."/>
            <person name="Fujita N."/>
        </authorList>
    </citation>
    <scope>NUCLEOTIDE SEQUENCE [LARGE SCALE GENOMIC DNA]</scope>
    <source>
        <strain>47 / JCM 6285 / NBRC 100599</strain>
    </source>
</reference>
<sequence length="248" mass="27612">MKLIVNADDFGYSKGVNLGIVEAHREGVVTSATLMVNMEGFEHAVGLAKEHPTLGVGIHLVLTCGSPVSQDVPSLTDGEGRFRRGQDHLISAVPEEIERELRAQLGRFVAAGLKLTHIDSHHHVHAHPAILPIVLKLAEEYRVPVRYPWLFGTQEKRDQLSILTTEGFSHHFYGDDLTVQSFVRIVEDMADYPVVEIMTHPAYLDEAVLTGSSYAKQRTTELKILTAAELKQYIHDQKIQLVTFSELG</sequence>
<dbReference type="EC" id="3.5.1.-" evidence="1"/>
<dbReference type="EMBL" id="AP008955">
    <property type="protein sequence ID" value="BAH46642.1"/>
    <property type="molecule type" value="Genomic_DNA"/>
</dbReference>
<dbReference type="RefSeq" id="WP_015893828.1">
    <property type="nucleotide sequence ID" value="NC_012491.1"/>
</dbReference>
<dbReference type="SMR" id="C0Z8L5"/>
<dbReference type="STRING" id="358681.BBR47_56650"/>
<dbReference type="KEGG" id="bbe:BBR47_56650"/>
<dbReference type="eggNOG" id="COG3394">
    <property type="taxonomic scope" value="Bacteria"/>
</dbReference>
<dbReference type="HOGENOM" id="CLU_064244_4_0_9"/>
<dbReference type="Proteomes" id="UP000001877">
    <property type="component" value="Chromosome"/>
</dbReference>
<dbReference type="GO" id="GO:0019213">
    <property type="term" value="F:deacetylase activity"/>
    <property type="evidence" value="ECO:0007669"/>
    <property type="project" value="TreeGrafter"/>
</dbReference>
<dbReference type="GO" id="GO:0016811">
    <property type="term" value="F:hydrolase activity, acting on carbon-nitrogen (but not peptide) bonds, in linear amides"/>
    <property type="evidence" value="ECO:0007669"/>
    <property type="project" value="UniProtKB-UniRule"/>
</dbReference>
<dbReference type="GO" id="GO:0046872">
    <property type="term" value="F:metal ion binding"/>
    <property type="evidence" value="ECO:0007669"/>
    <property type="project" value="UniProtKB-KW"/>
</dbReference>
<dbReference type="GO" id="GO:0000272">
    <property type="term" value="P:polysaccharide catabolic process"/>
    <property type="evidence" value="ECO:0007669"/>
    <property type="project" value="InterPro"/>
</dbReference>
<dbReference type="CDD" id="cd10803">
    <property type="entry name" value="YdjC_EF3048_like"/>
    <property type="match status" value="1"/>
</dbReference>
<dbReference type="Gene3D" id="3.20.20.370">
    <property type="entry name" value="Glycoside hydrolase/deacetylase"/>
    <property type="match status" value="1"/>
</dbReference>
<dbReference type="HAMAP" id="MF_01246">
    <property type="entry name" value="COD"/>
    <property type="match status" value="1"/>
</dbReference>
<dbReference type="InterPro" id="IPR022948">
    <property type="entry name" value="COD_ChbG_bac"/>
</dbReference>
<dbReference type="InterPro" id="IPR011330">
    <property type="entry name" value="Glyco_hydro/deAcase_b/a-brl"/>
</dbReference>
<dbReference type="InterPro" id="IPR006879">
    <property type="entry name" value="YdjC-like"/>
</dbReference>
<dbReference type="NCBIfam" id="NF002559">
    <property type="entry name" value="PRK02134.1"/>
    <property type="match status" value="1"/>
</dbReference>
<dbReference type="PANTHER" id="PTHR31609:SF1">
    <property type="entry name" value="CARBOHYDRATE DEACETYLASE"/>
    <property type="match status" value="1"/>
</dbReference>
<dbReference type="PANTHER" id="PTHR31609">
    <property type="entry name" value="YDJC DEACETYLASE FAMILY MEMBER"/>
    <property type="match status" value="1"/>
</dbReference>
<dbReference type="Pfam" id="PF04794">
    <property type="entry name" value="YdjC"/>
    <property type="match status" value="1"/>
</dbReference>
<dbReference type="SUPFAM" id="SSF88713">
    <property type="entry name" value="Glycoside hydrolase/deacetylase"/>
    <property type="match status" value="1"/>
</dbReference>
<accession>C0Z8L5</accession>
<organism>
    <name type="scientific">Brevibacillus brevis (strain 47 / JCM 6285 / NBRC 100599)</name>
    <dbReference type="NCBI Taxonomy" id="358681"/>
    <lineage>
        <taxon>Bacteria</taxon>
        <taxon>Bacillati</taxon>
        <taxon>Bacillota</taxon>
        <taxon>Bacilli</taxon>
        <taxon>Bacillales</taxon>
        <taxon>Paenibacillaceae</taxon>
        <taxon>Brevibacillus</taxon>
    </lineage>
</organism>
<proteinExistence type="inferred from homology"/>
<name>YDJC_BREBN</name>
<protein>
    <recommendedName>
        <fullName evidence="1">Carbohydrate deacetylase</fullName>
        <ecNumber evidence="1">3.5.1.-</ecNumber>
    </recommendedName>
</protein>
<comment type="function">
    <text evidence="1">Probably catalyzes the deacetylation of acetylated carbohydrates an important step in the degradation of oligosaccharides.</text>
</comment>
<comment type="cofactor">
    <cofactor evidence="1">
        <name>Mg(2+)</name>
        <dbReference type="ChEBI" id="CHEBI:18420"/>
    </cofactor>
</comment>
<comment type="similarity">
    <text evidence="1">Belongs to the YdjC deacetylase family.</text>
</comment>
<keyword id="KW-0119">Carbohydrate metabolism</keyword>
<keyword id="KW-0378">Hydrolase</keyword>
<keyword id="KW-0460">Magnesium</keyword>
<keyword id="KW-0479">Metal-binding</keyword>
<keyword id="KW-1185">Reference proteome</keyword>